<organism>
    <name type="scientific">Conus ventricosus</name>
    <name type="common">Mediterranean cone</name>
    <dbReference type="NCBI Taxonomy" id="117992"/>
    <lineage>
        <taxon>Eukaryota</taxon>
        <taxon>Metazoa</taxon>
        <taxon>Spiralia</taxon>
        <taxon>Lophotrochozoa</taxon>
        <taxon>Mollusca</taxon>
        <taxon>Gastropoda</taxon>
        <taxon>Caenogastropoda</taxon>
        <taxon>Neogastropoda</taxon>
        <taxon>Conoidea</taxon>
        <taxon>Conidae</taxon>
        <taxon>Conus</taxon>
        <taxon>Lautoconus</taxon>
    </lineage>
</organism>
<feature type="peptide" id="PRO_0000044506" description="Contryphan-Vn" evidence="1">
    <location>
        <begin position="1"/>
        <end position="9"/>
    </location>
</feature>
<feature type="modified residue" description="D-tryptophan" evidence="1">
    <location>
        <position position="5"/>
    </location>
</feature>
<feature type="modified residue" description="Cysteine amide" evidence="1">
    <location>
        <position position="9"/>
    </location>
</feature>
<feature type="disulfide bond" evidence="1 2 3">
    <location>
        <begin position="3"/>
        <end position="9"/>
    </location>
</feature>
<protein>
    <recommendedName>
        <fullName evidence="4 5 6">Contryphan-Vn</fullName>
    </recommendedName>
</protein>
<name>COW_CONVE</name>
<comment type="function">
    <text evidence="2">Affects both voltage-gated (Kv) and calcium-dependent potassium channel activities (KCa), with composite and diversified effects in invertebrate and vertebrate systems (PubMed:12646193). In vivo, intramuscular injection in freshwater fishes (Poecelia pinnata) causes secretion of mucous substances, a reaction already observed in fish with other contryphans (PubMed:12646193).</text>
</comment>
<comment type="subcellular location">
    <subcellularLocation>
        <location evidence="1">Secreted</location>
    </subcellularLocation>
</comment>
<comment type="tissue specificity">
    <text evidence="8">Expressed by the venom duct.</text>
</comment>
<comment type="domain">
    <text evidence="7">The cysteine framework is C-C.</text>
</comment>
<comment type="mass spectrometry" mass="1088.6" method="MALDI" evidence="1"/>
<comment type="miscellaneous">
    <text evidence="3">Exists in two forms, due to cis-trans isomerization at 3-Cys-Pro-4. The cis isomer is the most abundant and is thus thought to be the functionally relevant conformer.</text>
</comment>
<comment type="similarity">
    <text evidence="7">Belongs to the O2 superfamily. Contryphan family.</text>
</comment>
<accession>P83047</accession>
<proteinExistence type="evidence at protein level"/>
<sequence length="9" mass="1091">GDCPWKPWC</sequence>
<keyword id="KW-0002">3D-structure</keyword>
<keyword id="KW-0027">Amidation</keyword>
<keyword id="KW-1221">Calcium-activated potassium channel impairing toxin</keyword>
<keyword id="KW-0208">D-amino acid</keyword>
<keyword id="KW-0903">Direct protein sequencing</keyword>
<keyword id="KW-1015">Disulfide bond</keyword>
<keyword id="KW-0872">Ion channel impairing toxin</keyword>
<keyword id="KW-0528">Neurotoxin</keyword>
<keyword id="KW-0632">Potassium channel impairing toxin</keyword>
<keyword id="KW-0964">Secreted</keyword>
<keyword id="KW-0800">Toxin</keyword>
<keyword id="KW-1220">Voltage-gated potassium channel impairing toxin</keyword>
<dbReference type="PDB" id="1NXN">
    <property type="method" value="NMR"/>
    <property type="chains" value="A=1-9"/>
</dbReference>
<dbReference type="PDBsum" id="1NXN"/>
<dbReference type="ConoServer" id="1309">
    <property type="toxin name" value="Contryphan-Vn"/>
</dbReference>
<dbReference type="GO" id="GO:0005576">
    <property type="term" value="C:extracellular region"/>
    <property type="evidence" value="ECO:0007669"/>
    <property type="project" value="UniProtKB-SubCell"/>
</dbReference>
<dbReference type="GO" id="GO:0015459">
    <property type="term" value="F:potassium channel regulator activity"/>
    <property type="evidence" value="ECO:0007669"/>
    <property type="project" value="UniProtKB-KW"/>
</dbReference>
<dbReference type="GO" id="GO:0090729">
    <property type="term" value="F:toxin activity"/>
    <property type="evidence" value="ECO:0007669"/>
    <property type="project" value="UniProtKB-KW"/>
</dbReference>
<dbReference type="InterPro" id="IPR011062">
    <property type="entry name" value="Contryphan_CS"/>
</dbReference>
<dbReference type="PROSITE" id="PS60027">
    <property type="entry name" value="CONTRYPHAN"/>
    <property type="match status" value="1"/>
</dbReference>
<reference key="1">
    <citation type="journal article" date="2001" name="Biochem. Biophys. Res. Commun.">
        <title>Contryphan-Vn: a novel peptide from the venom of the Mediterranean snail Conus ventricosus.</title>
        <authorList>
            <person name="Massilia G.R."/>
            <person name="Schinina M.E."/>
            <person name="Ascenzi P."/>
            <person name="Polticelli F."/>
        </authorList>
    </citation>
    <scope>PROTEIN SEQUENCE</scope>
    <scope>D-AMINO ACID AT TRP-5</scope>
    <scope>AMIDATION AT CYS-9</scope>
    <scope>DISULFIDE BONDS</scope>
    <scope>SYNTHESIS</scope>
    <scope>MASS SPECTROMETRY</scope>
    <scope>SUBCELLULAR LOCATION</scope>
    <source>
        <tissue>Venom</tissue>
    </source>
</reference>
<reference key="2">
    <citation type="journal article" date="2003" name="Biochem. Biophys. Res. Commun.">
        <title>Contryphan-Vn: a modulator of Ca2+-dependent K+ channels.</title>
        <authorList>
            <person name="Massilia G.R."/>
            <person name="Eliseo T."/>
            <person name="Grolleau F."/>
            <person name="Lapied B."/>
            <person name="Barbier J."/>
            <person name="Bournaud R."/>
            <person name="Molgo J."/>
            <person name="Cicero D.O."/>
            <person name="Paci M."/>
            <person name="Schinina M.E."/>
            <person name="Ascenzi P."/>
            <person name="Polticelli F."/>
        </authorList>
    </citation>
    <scope>FUNCTION</scope>
    <scope>SYNTHESIS</scope>
    <scope>STRUCTURE BY NMR</scope>
    <scope>DISULFIDE BONDS</scope>
</reference>
<reference key="3">
    <citation type="journal article" date="2004" name="Biopolymers">
        <title>Solution structure of the cyclic peptide contryphan-Vn, a Ca2+-dependent K+ channel modulator.</title>
        <authorList>
            <person name="Eliseo T."/>
            <person name="Cicero D.O."/>
            <person name="Romeo C."/>
            <person name="Schinina M.E."/>
            <person name="Massilia G.R."/>
            <person name="Polticelli F."/>
            <person name="Ascenzi P."/>
            <person name="Paci M."/>
        </authorList>
    </citation>
    <scope>STRUCTURE BY NMR</scope>
    <scope>DISULFIDE BONDS</scope>
    <scope>CIS-TRANS ISOMERIZATION</scope>
</reference>
<evidence type="ECO:0000269" key="1">
    <source>
    </source>
</evidence>
<evidence type="ECO:0000269" key="2">
    <source>
    </source>
</evidence>
<evidence type="ECO:0000269" key="3">
    <source>
    </source>
</evidence>
<evidence type="ECO:0000303" key="4">
    <source>
    </source>
</evidence>
<evidence type="ECO:0000303" key="5">
    <source>
    </source>
</evidence>
<evidence type="ECO:0000303" key="6">
    <source>
    </source>
</evidence>
<evidence type="ECO:0000305" key="7"/>
<evidence type="ECO:0000305" key="8">
    <source>
    </source>
</evidence>